<gene>
    <name evidence="1" type="primary">hisA</name>
    <name type="ordered locus">glr0706</name>
</gene>
<dbReference type="EC" id="5.3.1.16" evidence="1"/>
<dbReference type="EMBL" id="BA000045">
    <property type="protein sequence ID" value="BAC88647.1"/>
    <property type="molecule type" value="Genomic_DNA"/>
</dbReference>
<dbReference type="RefSeq" id="NP_923652.1">
    <property type="nucleotide sequence ID" value="NC_005125.1"/>
</dbReference>
<dbReference type="RefSeq" id="WP_011140708.1">
    <property type="nucleotide sequence ID" value="NC_005125.1"/>
</dbReference>
<dbReference type="SMR" id="Q7NMQ9"/>
<dbReference type="FunCoup" id="Q7NMQ9">
    <property type="interactions" value="90"/>
</dbReference>
<dbReference type="STRING" id="251221.gene:10758182"/>
<dbReference type="EnsemblBacteria" id="BAC88647">
    <property type="protein sequence ID" value="BAC88647"/>
    <property type="gene ID" value="BAC88647"/>
</dbReference>
<dbReference type="KEGG" id="gvi:glr0706"/>
<dbReference type="PATRIC" id="fig|251221.4.peg.717"/>
<dbReference type="eggNOG" id="COG0106">
    <property type="taxonomic scope" value="Bacteria"/>
</dbReference>
<dbReference type="HOGENOM" id="CLU_048577_1_1_3"/>
<dbReference type="InParanoid" id="Q7NMQ9"/>
<dbReference type="OrthoDB" id="9807749at2"/>
<dbReference type="PhylomeDB" id="Q7NMQ9"/>
<dbReference type="UniPathway" id="UPA00031">
    <property type="reaction ID" value="UER00009"/>
</dbReference>
<dbReference type="Proteomes" id="UP000000557">
    <property type="component" value="Chromosome"/>
</dbReference>
<dbReference type="GO" id="GO:0005737">
    <property type="term" value="C:cytoplasm"/>
    <property type="evidence" value="ECO:0000318"/>
    <property type="project" value="GO_Central"/>
</dbReference>
<dbReference type="GO" id="GO:0003949">
    <property type="term" value="F:1-(5-phosphoribosyl)-5-[(5-phosphoribosylamino)methylideneamino]imidazole-4-carboxamide isomerase activity"/>
    <property type="evidence" value="ECO:0000318"/>
    <property type="project" value="GO_Central"/>
</dbReference>
<dbReference type="GO" id="GO:0000105">
    <property type="term" value="P:L-histidine biosynthetic process"/>
    <property type="evidence" value="ECO:0000318"/>
    <property type="project" value="GO_Central"/>
</dbReference>
<dbReference type="CDD" id="cd04732">
    <property type="entry name" value="HisA"/>
    <property type="match status" value="1"/>
</dbReference>
<dbReference type="FunFam" id="3.20.20.70:FF:000009">
    <property type="entry name" value="1-(5-phosphoribosyl)-5-[(5-phosphoribosylamino)methylideneamino] imidazole-4-carboxamide isomerase"/>
    <property type="match status" value="1"/>
</dbReference>
<dbReference type="Gene3D" id="3.20.20.70">
    <property type="entry name" value="Aldolase class I"/>
    <property type="match status" value="1"/>
</dbReference>
<dbReference type="HAMAP" id="MF_01014">
    <property type="entry name" value="HisA"/>
    <property type="match status" value="1"/>
</dbReference>
<dbReference type="InterPro" id="IPR013785">
    <property type="entry name" value="Aldolase_TIM"/>
</dbReference>
<dbReference type="InterPro" id="IPR006062">
    <property type="entry name" value="His_biosynth"/>
</dbReference>
<dbReference type="InterPro" id="IPR006063">
    <property type="entry name" value="HisA_bact_arch"/>
</dbReference>
<dbReference type="InterPro" id="IPR044524">
    <property type="entry name" value="Isoase_HisA-like"/>
</dbReference>
<dbReference type="InterPro" id="IPR023016">
    <property type="entry name" value="Isoase_HisA-like_bact"/>
</dbReference>
<dbReference type="InterPro" id="IPR011060">
    <property type="entry name" value="RibuloseP-bd_barrel"/>
</dbReference>
<dbReference type="NCBIfam" id="TIGR00007">
    <property type="entry name" value="1-(5-phosphoribosyl)-5-[(5-phosphoribosylamino)methylideneamino]imidazole-4-carboxamide isomerase"/>
    <property type="match status" value="1"/>
</dbReference>
<dbReference type="NCBIfam" id="NF010112">
    <property type="entry name" value="PRK13585.1"/>
    <property type="match status" value="1"/>
</dbReference>
<dbReference type="PANTHER" id="PTHR43090">
    <property type="entry name" value="1-(5-PHOSPHORIBOSYL)-5-[(5-PHOSPHORIBOSYLAMINO)METHYLIDENEAMINO] IMIDAZOLE-4-CARBOXAMIDE ISOMERASE"/>
    <property type="match status" value="1"/>
</dbReference>
<dbReference type="PANTHER" id="PTHR43090:SF2">
    <property type="entry name" value="1-(5-PHOSPHORIBOSYL)-5-[(5-PHOSPHORIBOSYLAMINO)METHYLIDENEAMINO] IMIDAZOLE-4-CARBOXAMIDE ISOMERASE"/>
    <property type="match status" value="1"/>
</dbReference>
<dbReference type="Pfam" id="PF00977">
    <property type="entry name" value="His_biosynth"/>
    <property type="match status" value="1"/>
</dbReference>
<dbReference type="SUPFAM" id="SSF51366">
    <property type="entry name" value="Ribulose-phoshate binding barrel"/>
    <property type="match status" value="1"/>
</dbReference>
<proteinExistence type="inferred from homology"/>
<feature type="chain" id="PRO_0000142009" description="1-(5-phosphoribosyl)-5-[(5-phosphoribosylamino)methylideneamino] imidazole-4-carboxamide isomerase">
    <location>
        <begin position="1"/>
        <end position="255"/>
    </location>
</feature>
<feature type="active site" description="Proton acceptor" evidence="1">
    <location>
        <position position="8"/>
    </location>
</feature>
<feature type="active site" description="Proton donor" evidence="1">
    <location>
        <position position="129"/>
    </location>
</feature>
<name>HIS4_GLOVI</name>
<protein>
    <recommendedName>
        <fullName evidence="1">1-(5-phosphoribosyl)-5-[(5-phosphoribosylamino)methylideneamino] imidazole-4-carboxamide isomerase</fullName>
        <ecNumber evidence="1">5.3.1.16</ecNumber>
    </recommendedName>
    <alternativeName>
        <fullName evidence="1">Phosphoribosylformimino-5-aminoimidazole carboxamide ribotide isomerase</fullName>
    </alternativeName>
</protein>
<organism>
    <name type="scientific">Gloeobacter violaceus (strain ATCC 29082 / PCC 7421)</name>
    <dbReference type="NCBI Taxonomy" id="251221"/>
    <lineage>
        <taxon>Bacteria</taxon>
        <taxon>Bacillati</taxon>
        <taxon>Cyanobacteriota</taxon>
        <taxon>Cyanophyceae</taxon>
        <taxon>Gloeobacterales</taxon>
        <taxon>Gloeobacteraceae</taxon>
        <taxon>Gloeobacter</taxon>
    </lineage>
</organism>
<sequence length="255" mass="27018">MDIIPAIDILDGRCVRLYQGNYQLAETYGEDPVAVACNWAKLGAPRLHVVDLDGARQGMPVHLDALEAIVTQVPCPVQFGGGLRSIEAVSAVLDRGVDRVILGTAAVENPALIRECCERFGGRIAVGLDARGGQVAVRGWRETSEVEVTELAGEMEKLGVSAIVYTDILKDGTLTGPNLVELQRLTDAVKVPIIASGGVGTLADVLYLLALEPRGLQGVIIGRALYTGDVDLAEALRAAGPSRWQDLPPDDVAFA</sequence>
<reference key="1">
    <citation type="journal article" date="2003" name="DNA Res.">
        <title>Complete genome structure of Gloeobacter violaceus PCC 7421, a cyanobacterium that lacks thylakoids.</title>
        <authorList>
            <person name="Nakamura Y."/>
            <person name="Kaneko T."/>
            <person name="Sato S."/>
            <person name="Mimuro M."/>
            <person name="Miyashita H."/>
            <person name="Tsuchiya T."/>
            <person name="Sasamoto S."/>
            <person name="Watanabe A."/>
            <person name="Kawashima K."/>
            <person name="Kishida Y."/>
            <person name="Kiyokawa C."/>
            <person name="Kohara M."/>
            <person name="Matsumoto M."/>
            <person name="Matsuno A."/>
            <person name="Nakazaki N."/>
            <person name="Shimpo S."/>
            <person name="Takeuchi C."/>
            <person name="Yamada M."/>
            <person name="Tabata S."/>
        </authorList>
    </citation>
    <scope>NUCLEOTIDE SEQUENCE [LARGE SCALE GENOMIC DNA]</scope>
    <source>
        <strain>ATCC 29082 / PCC 7421</strain>
    </source>
</reference>
<comment type="catalytic activity">
    <reaction evidence="1">
        <text>1-(5-phospho-beta-D-ribosyl)-5-[(5-phospho-beta-D-ribosylamino)methylideneamino]imidazole-4-carboxamide = 5-[(5-phospho-1-deoxy-D-ribulos-1-ylimino)methylamino]-1-(5-phospho-beta-D-ribosyl)imidazole-4-carboxamide</text>
        <dbReference type="Rhea" id="RHEA:15469"/>
        <dbReference type="ChEBI" id="CHEBI:58435"/>
        <dbReference type="ChEBI" id="CHEBI:58525"/>
        <dbReference type="EC" id="5.3.1.16"/>
    </reaction>
</comment>
<comment type="pathway">
    <text evidence="1">Amino-acid biosynthesis; L-histidine biosynthesis; L-histidine from 5-phospho-alpha-D-ribose 1-diphosphate: step 4/9.</text>
</comment>
<comment type="subcellular location">
    <subcellularLocation>
        <location evidence="1">Cytoplasm</location>
    </subcellularLocation>
</comment>
<comment type="similarity">
    <text evidence="1">Belongs to the HisA/HisF family.</text>
</comment>
<accession>Q7NMQ9</accession>
<evidence type="ECO:0000255" key="1">
    <source>
        <dbReference type="HAMAP-Rule" id="MF_01014"/>
    </source>
</evidence>
<keyword id="KW-0028">Amino-acid biosynthesis</keyword>
<keyword id="KW-0963">Cytoplasm</keyword>
<keyword id="KW-0368">Histidine biosynthesis</keyword>
<keyword id="KW-0413">Isomerase</keyword>
<keyword id="KW-1185">Reference proteome</keyword>